<organism>
    <name type="scientific">Pseudomonas aeruginosa (strain ATCC 15692 / DSM 22644 / CIP 104116 / JCM 14847 / LMG 12228 / 1C / PRS 101 / PAO1)</name>
    <dbReference type="NCBI Taxonomy" id="208964"/>
    <lineage>
        <taxon>Bacteria</taxon>
        <taxon>Pseudomonadati</taxon>
        <taxon>Pseudomonadota</taxon>
        <taxon>Gammaproteobacteria</taxon>
        <taxon>Pseudomonadales</taxon>
        <taxon>Pseudomonadaceae</taxon>
        <taxon>Pseudomonas</taxon>
    </lineage>
</organism>
<gene>
    <name evidence="1" type="primary">rplR</name>
    <name type="ordered locus">PA4247</name>
</gene>
<comment type="function">
    <text evidence="1">This is one of the proteins that bind and probably mediate the attachment of the 5S RNA into the large ribosomal subunit, where it forms part of the central protuberance.</text>
</comment>
<comment type="subunit">
    <text evidence="1">Part of the 50S ribosomal subunit; part of the 5S rRNA/L5/L18/L25 subcomplex. Contacts the 5S and 23S rRNAs.</text>
</comment>
<comment type="similarity">
    <text evidence="1">Belongs to the universal ribosomal protein uL18 family.</text>
</comment>
<reference key="1">
    <citation type="journal article" date="2000" name="Nature">
        <title>Complete genome sequence of Pseudomonas aeruginosa PAO1, an opportunistic pathogen.</title>
        <authorList>
            <person name="Stover C.K."/>
            <person name="Pham X.-Q.T."/>
            <person name="Erwin A.L."/>
            <person name="Mizoguchi S.D."/>
            <person name="Warrener P."/>
            <person name="Hickey M.J."/>
            <person name="Brinkman F.S.L."/>
            <person name="Hufnagle W.O."/>
            <person name="Kowalik D.J."/>
            <person name="Lagrou M."/>
            <person name="Garber R.L."/>
            <person name="Goltry L."/>
            <person name="Tolentino E."/>
            <person name="Westbrock-Wadman S."/>
            <person name="Yuan Y."/>
            <person name="Brody L.L."/>
            <person name="Coulter S.N."/>
            <person name="Folger K.R."/>
            <person name="Kas A."/>
            <person name="Larbig K."/>
            <person name="Lim R.M."/>
            <person name="Smith K.A."/>
            <person name="Spencer D.H."/>
            <person name="Wong G.K.-S."/>
            <person name="Wu Z."/>
            <person name="Paulsen I.T."/>
            <person name="Reizer J."/>
            <person name="Saier M.H. Jr."/>
            <person name="Hancock R.E.W."/>
            <person name="Lory S."/>
            <person name="Olson M.V."/>
        </authorList>
    </citation>
    <scope>NUCLEOTIDE SEQUENCE [LARGE SCALE GENOMIC DNA]</scope>
    <source>
        <strain>ATCC 15692 / DSM 22644 / CIP 104116 / JCM 14847 / LMG 12228 / 1C / PRS 101 / PAO1</strain>
    </source>
</reference>
<name>RL18_PSEAE</name>
<dbReference type="EMBL" id="AE004091">
    <property type="protein sequence ID" value="AAG07635.1"/>
    <property type="molecule type" value="Genomic_DNA"/>
</dbReference>
<dbReference type="PIR" id="E83114">
    <property type="entry name" value="E83114"/>
</dbReference>
<dbReference type="RefSeq" id="NP_252937.1">
    <property type="nucleotide sequence ID" value="NC_002516.2"/>
</dbReference>
<dbReference type="RefSeq" id="WP_003093698.1">
    <property type="nucleotide sequence ID" value="NZ_QZGE01000028.1"/>
</dbReference>
<dbReference type="PDB" id="7UNR">
    <property type="method" value="EM"/>
    <property type="resolution" value="2.90 A"/>
    <property type="chains" value="Q=1-116"/>
</dbReference>
<dbReference type="PDB" id="7UNU">
    <property type="method" value="EM"/>
    <property type="resolution" value="2.90 A"/>
    <property type="chains" value="Q=1-116"/>
</dbReference>
<dbReference type="PDB" id="7UNV">
    <property type="method" value="EM"/>
    <property type="resolution" value="2.70 A"/>
    <property type="chains" value="Q=1-116"/>
</dbReference>
<dbReference type="PDB" id="7UNW">
    <property type="method" value="EM"/>
    <property type="resolution" value="2.60 A"/>
    <property type="chains" value="Q=1-116"/>
</dbReference>
<dbReference type="PDB" id="8CD1">
    <property type="method" value="EM"/>
    <property type="resolution" value="3.00 A"/>
    <property type="chains" value="O=1-116"/>
</dbReference>
<dbReference type="PDB" id="8RWG">
    <property type="method" value="EM"/>
    <property type="resolution" value="2.46 A"/>
    <property type="chains" value="O=1-116"/>
</dbReference>
<dbReference type="PDBsum" id="7UNR"/>
<dbReference type="PDBsum" id="7UNU"/>
<dbReference type="PDBsum" id="7UNV"/>
<dbReference type="PDBsum" id="7UNW"/>
<dbReference type="PDBsum" id="8CD1"/>
<dbReference type="PDBsum" id="8RWG"/>
<dbReference type="EMDB" id="EMD-16566"/>
<dbReference type="EMDB" id="EMD-19547"/>
<dbReference type="EMDB" id="EMD-26630"/>
<dbReference type="EMDB" id="EMD-26633"/>
<dbReference type="EMDB" id="EMD-26634"/>
<dbReference type="EMDB" id="EMD-26635"/>
<dbReference type="SMR" id="Q9HWF1"/>
<dbReference type="FunCoup" id="Q9HWF1">
    <property type="interactions" value="792"/>
</dbReference>
<dbReference type="STRING" id="208964.PA4247"/>
<dbReference type="PaxDb" id="208964-PA4247"/>
<dbReference type="DNASU" id="881795"/>
<dbReference type="GeneID" id="77219214"/>
<dbReference type="GeneID" id="881795"/>
<dbReference type="KEGG" id="pae:PA4247"/>
<dbReference type="PATRIC" id="fig|208964.12.peg.4448"/>
<dbReference type="PseudoCAP" id="PA4247"/>
<dbReference type="HOGENOM" id="CLU_098841_0_1_6"/>
<dbReference type="InParanoid" id="Q9HWF1"/>
<dbReference type="OrthoDB" id="9810939at2"/>
<dbReference type="PhylomeDB" id="Q9HWF1"/>
<dbReference type="BioCyc" id="PAER208964:G1FZ6-4320-MONOMER"/>
<dbReference type="PRO" id="PR:Q9HWF1"/>
<dbReference type="Proteomes" id="UP000002438">
    <property type="component" value="Chromosome"/>
</dbReference>
<dbReference type="GO" id="GO:0022625">
    <property type="term" value="C:cytosolic large ribosomal subunit"/>
    <property type="evidence" value="ECO:0000318"/>
    <property type="project" value="GO_Central"/>
</dbReference>
<dbReference type="GO" id="GO:0008097">
    <property type="term" value="F:5S rRNA binding"/>
    <property type="evidence" value="ECO:0000318"/>
    <property type="project" value="GO_Central"/>
</dbReference>
<dbReference type="GO" id="GO:0003735">
    <property type="term" value="F:structural constituent of ribosome"/>
    <property type="evidence" value="ECO:0007669"/>
    <property type="project" value="InterPro"/>
</dbReference>
<dbReference type="GO" id="GO:0006412">
    <property type="term" value="P:translation"/>
    <property type="evidence" value="ECO:0007669"/>
    <property type="project" value="UniProtKB-UniRule"/>
</dbReference>
<dbReference type="CDD" id="cd00432">
    <property type="entry name" value="Ribosomal_L18_L5e"/>
    <property type="match status" value="1"/>
</dbReference>
<dbReference type="FunFam" id="3.30.420.100:FF:000001">
    <property type="entry name" value="50S ribosomal protein L18"/>
    <property type="match status" value="1"/>
</dbReference>
<dbReference type="Gene3D" id="3.30.420.100">
    <property type="match status" value="1"/>
</dbReference>
<dbReference type="HAMAP" id="MF_01337_B">
    <property type="entry name" value="Ribosomal_uL18_B"/>
    <property type="match status" value="1"/>
</dbReference>
<dbReference type="InterPro" id="IPR004389">
    <property type="entry name" value="Ribosomal_uL18_bac-type"/>
</dbReference>
<dbReference type="InterPro" id="IPR005484">
    <property type="entry name" value="Ribosomal_uL18_bac/euk"/>
</dbReference>
<dbReference type="NCBIfam" id="TIGR00060">
    <property type="entry name" value="L18_bact"/>
    <property type="match status" value="1"/>
</dbReference>
<dbReference type="PANTHER" id="PTHR12899">
    <property type="entry name" value="39S RIBOSOMAL PROTEIN L18, MITOCHONDRIAL"/>
    <property type="match status" value="1"/>
</dbReference>
<dbReference type="PANTHER" id="PTHR12899:SF3">
    <property type="entry name" value="LARGE RIBOSOMAL SUBUNIT PROTEIN UL18M"/>
    <property type="match status" value="1"/>
</dbReference>
<dbReference type="Pfam" id="PF00861">
    <property type="entry name" value="Ribosomal_L18p"/>
    <property type="match status" value="1"/>
</dbReference>
<dbReference type="SUPFAM" id="SSF53137">
    <property type="entry name" value="Translational machinery components"/>
    <property type="match status" value="1"/>
</dbReference>
<accession>Q9HWF1</accession>
<sequence length="116" mass="12662">MSVKKETRLRRARKARLKMRELETVRLCVYRSSQHIYAQVIAADGGKVLASASTLDKDLREGATGNIDAAKKVGQLVAERAKAAGVTQVAFDRSGFKYHGRVKALADAAREGGLEF</sequence>
<evidence type="ECO:0000255" key="1">
    <source>
        <dbReference type="HAMAP-Rule" id="MF_01337"/>
    </source>
</evidence>
<evidence type="ECO:0000305" key="2"/>
<keyword id="KW-0002">3D-structure</keyword>
<keyword id="KW-1185">Reference proteome</keyword>
<keyword id="KW-0687">Ribonucleoprotein</keyword>
<keyword id="KW-0689">Ribosomal protein</keyword>
<keyword id="KW-0694">RNA-binding</keyword>
<keyword id="KW-0699">rRNA-binding</keyword>
<protein>
    <recommendedName>
        <fullName evidence="1">Large ribosomal subunit protein uL18</fullName>
    </recommendedName>
    <alternativeName>
        <fullName evidence="2">50S ribosomal protein L18</fullName>
    </alternativeName>
</protein>
<feature type="chain" id="PRO_0000131322" description="Large ribosomal subunit protein uL18">
    <location>
        <begin position="1"/>
        <end position="116"/>
    </location>
</feature>
<proteinExistence type="evidence at protein level"/>